<accession>Q59U11</accession>
<accession>A0A1D8PT79</accession>
<sequence>MSAFAALKNNPFGESIFNNTSNGDNHSRDDVEEDEVVQYIANSSDEDDDDDNDDNDNDQGNEDNNLFPLEISAPVDTSISSTPAPILNSRITQSNYTPNESNLKFSDNHVTITLNPSEYIIISGQCNLKIIKGSIKINQCHCLTSEDNKSYNIIALQSQSLPIISHYTTPEMEEDGVTSVSIIQLENSFSGIENISQIEPAFKNLISGQPNVEEPSLFKNYSFDIVLTETNGGYGLDINSYWINELNLLKSNKDDPTPKIIMIIGNKNTGKSTFCKSLINELLLTNPNRPVSYLEIDPGQSEYSTPCALSLSEIVQAQFGLAALPHKNNNIVKSRVEHYFGFTSAVNAPTRYVEIIEELFNHHQTKFSQRNHLIINTPGWVKGYGKELLNQITKIINPDKLILLSNNLNQEYPDNANILQDLTYQSLSIIPGVYQLSKYSAPQIRTINKLLYFHQTTTTGTFNFNDHLLDSSPLKISYACGNSPNNPGIYSTTIINHNIDNEFSHRDLCSLVEVSIYGIYSIKSNGNTKFDEMSCFRRDDGNSPFYLNPDDFDNLLSNETITSKFIGLIMVHSINPNDHYMNIYAPDIIINRLRKVLSTNSNQTNDYKLIMIRGEGDIPNCEMLYPEFINKKIDYLKSIKKRKAATTSRKLVDLKLPYISFETKSKVGGIWKVRKNIKRRGHHQKG</sequence>
<dbReference type="EC" id="2.7.1.-"/>
<dbReference type="EMBL" id="CP017630">
    <property type="protein sequence ID" value="AOW31344.1"/>
    <property type="molecule type" value="Genomic_DNA"/>
</dbReference>
<dbReference type="RefSeq" id="XP_713081.2">
    <property type="nucleotide sequence ID" value="XM_707988.2"/>
</dbReference>
<dbReference type="SMR" id="Q59U11"/>
<dbReference type="FunCoup" id="Q59U11">
    <property type="interactions" value="155"/>
</dbReference>
<dbReference type="STRING" id="237561.Q59U11"/>
<dbReference type="EnsemblFungi" id="CR_06450W_A-T">
    <property type="protein sequence ID" value="CR_06450W_A-T-p1"/>
    <property type="gene ID" value="CR_06450W_A"/>
</dbReference>
<dbReference type="GeneID" id="3645279"/>
<dbReference type="KEGG" id="cal:CAALFM_CR06450WA"/>
<dbReference type="CGD" id="CAL0000182248">
    <property type="gene designation" value="orf19.8340"/>
</dbReference>
<dbReference type="VEuPathDB" id="FungiDB:CR_06450W_A"/>
<dbReference type="eggNOG" id="KOG2750">
    <property type="taxonomic scope" value="Eukaryota"/>
</dbReference>
<dbReference type="HOGENOM" id="CLU_010345_1_1_1"/>
<dbReference type="InParanoid" id="Q59U11"/>
<dbReference type="OrthoDB" id="4054781at2759"/>
<dbReference type="PRO" id="PR:Q59U11"/>
<dbReference type="Proteomes" id="UP000000559">
    <property type="component" value="Chromosome R"/>
</dbReference>
<dbReference type="GO" id="GO:0005730">
    <property type="term" value="C:nucleolus"/>
    <property type="evidence" value="ECO:0007669"/>
    <property type="project" value="UniProtKB-SubCell"/>
</dbReference>
<dbReference type="GO" id="GO:0005634">
    <property type="term" value="C:nucleus"/>
    <property type="evidence" value="ECO:0000318"/>
    <property type="project" value="GO_Central"/>
</dbReference>
<dbReference type="GO" id="GO:0005524">
    <property type="term" value="F:ATP binding"/>
    <property type="evidence" value="ECO:0007669"/>
    <property type="project" value="UniProtKB-KW"/>
</dbReference>
<dbReference type="GO" id="GO:0051731">
    <property type="term" value="F:polynucleotide 5'-hydroxyl-kinase activity"/>
    <property type="evidence" value="ECO:0000250"/>
    <property type="project" value="UniProtKB"/>
</dbReference>
<dbReference type="GO" id="GO:0000448">
    <property type="term" value="P:cleavage in ITS2 between 5.8S rRNA and LSU-rRNA of tricistronic rRNA transcript (SSU-rRNA, 5.8S rRNA, LSU-rRNA)"/>
    <property type="evidence" value="ECO:0000318"/>
    <property type="project" value="GO_Central"/>
</dbReference>
<dbReference type="GO" id="GO:0006364">
    <property type="term" value="P:rRNA processing"/>
    <property type="evidence" value="ECO:0000250"/>
    <property type="project" value="UniProtKB"/>
</dbReference>
<dbReference type="FunFam" id="3.40.50.300:FF:003052">
    <property type="entry name" value="Polynucleotide 5'-hydroxyl-kinase nol-9"/>
    <property type="match status" value="1"/>
</dbReference>
<dbReference type="Gene3D" id="3.40.50.300">
    <property type="entry name" value="P-loop containing nucleotide triphosphate hydrolases"/>
    <property type="match status" value="1"/>
</dbReference>
<dbReference type="InterPro" id="IPR045116">
    <property type="entry name" value="Clp1/Grc3"/>
</dbReference>
<dbReference type="InterPro" id="IPR032319">
    <property type="entry name" value="CLP1_P"/>
</dbReference>
<dbReference type="InterPro" id="IPR027417">
    <property type="entry name" value="P-loop_NTPase"/>
</dbReference>
<dbReference type="PANTHER" id="PTHR12755">
    <property type="entry name" value="CLEAVAGE/POLYADENYLATION FACTOR IA SUBUNIT CLP1P"/>
    <property type="match status" value="1"/>
</dbReference>
<dbReference type="PANTHER" id="PTHR12755:SF3">
    <property type="entry name" value="POLYNUCLEOTIDE 5'-HYDROXYL-KINASE NOL9"/>
    <property type="match status" value="1"/>
</dbReference>
<dbReference type="Pfam" id="PF16575">
    <property type="entry name" value="CLP1_P"/>
    <property type="match status" value="1"/>
</dbReference>
<dbReference type="SUPFAM" id="SSF52540">
    <property type="entry name" value="P-loop containing nucleoside triphosphate hydrolases"/>
    <property type="match status" value="1"/>
</dbReference>
<organism>
    <name type="scientific">Candida albicans (strain SC5314 / ATCC MYA-2876)</name>
    <name type="common">Yeast</name>
    <dbReference type="NCBI Taxonomy" id="237561"/>
    <lineage>
        <taxon>Eukaryota</taxon>
        <taxon>Fungi</taxon>
        <taxon>Dikarya</taxon>
        <taxon>Ascomycota</taxon>
        <taxon>Saccharomycotina</taxon>
        <taxon>Pichiomycetes</taxon>
        <taxon>Debaryomycetaceae</taxon>
        <taxon>Candida/Lodderomyces clade</taxon>
        <taxon>Candida</taxon>
    </lineage>
</organism>
<name>GRC3_CANAL</name>
<evidence type="ECO:0000250" key="1"/>
<evidence type="ECO:0000255" key="2"/>
<evidence type="ECO:0000256" key="3">
    <source>
        <dbReference type="SAM" id="MobiDB-lite"/>
    </source>
</evidence>
<evidence type="ECO:0000305" key="4"/>
<proteinExistence type="inferred from homology"/>
<feature type="chain" id="PRO_0000087589" description="Polynucleotide 5'-hydroxyl-kinase GRC3">
    <location>
        <begin position="1"/>
        <end position="686"/>
    </location>
</feature>
<feature type="region of interest" description="Disordered" evidence="3">
    <location>
        <begin position="1"/>
        <end position="67"/>
    </location>
</feature>
<feature type="compositionally biased region" description="Acidic residues" evidence="3">
    <location>
        <begin position="44"/>
        <end position="61"/>
    </location>
</feature>
<feature type="binding site" evidence="2">
    <location>
        <begin position="265"/>
        <end position="272"/>
    </location>
    <ligand>
        <name>ATP</name>
        <dbReference type="ChEBI" id="CHEBI:30616"/>
    </ligand>
</feature>
<comment type="function">
    <text evidence="1">Polynucleotide 5'-kinase involved in rRNA processing.</text>
</comment>
<comment type="subcellular location">
    <subcellularLocation>
        <location evidence="1">Nucleus</location>
        <location evidence="1">Nucleolus</location>
    </subcellularLocation>
</comment>
<comment type="similarity">
    <text evidence="4">Belongs to the Clp1 family. NOL9/GRC3 subfamily.</text>
</comment>
<protein>
    <recommendedName>
        <fullName>Polynucleotide 5'-hydroxyl-kinase GRC3</fullName>
        <ecNumber>2.7.1.-</ecNumber>
    </recommendedName>
</protein>
<keyword id="KW-0067">ATP-binding</keyword>
<keyword id="KW-0418">Kinase</keyword>
<keyword id="KW-0547">Nucleotide-binding</keyword>
<keyword id="KW-0539">Nucleus</keyword>
<keyword id="KW-1185">Reference proteome</keyword>
<keyword id="KW-0698">rRNA processing</keyword>
<keyword id="KW-0808">Transferase</keyword>
<gene>
    <name type="primary">GRC3</name>
    <name type="ordered locus">CAALFM_CR06450WA</name>
    <name type="ORF">CaO19.721</name>
    <name type="ORF">CaO19.8340</name>
</gene>
<reference key="1">
    <citation type="journal article" date="2004" name="Proc. Natl. Acad. Sci. U.S.A.">
        <title>The diploid genome sequence of Candida albicans.</title>
        <authorList>
            <person name="Jones T."/>
            <person name="Federspiel N.A."/>
            <person name="Chibana H."/>
            <person name="Dungan J."/>
            <person name="Kalman S."/>
            <person name="Magee B.B."/>
            <person name="Newport G."/>
            <person name="Thorstenson Y.R."/>
            <person name="Agabian N."/>
            <person name="Magee P.T."/>
            <person name="Davis R.W."/>
            <person name="Scherer S."/>
        </authorList>
    </citation>
    <scope>NUCLEOTIDE SEQUENCE [LARGE SCALE GENOMIC DNA]</scope>
    <source>
        <strain>SC5314 / ATCC MYA-2876</strain>
    </source>
</reference>
<reference key="2">
    <citation type="journal article" date="2007" name="Genome Biol.">
        <title>Assembly of the Candida albicans genome into sixteen supercontigs aligned on the eight chromosomes.</title>
        <authorList>
            <person name="van het Hoog M."/>
            <person name="Rast T.J."/>
            <person name="Martchenko M."/>
            <person name="Grindle S."/>
            <person name="Dignard D."/>
            <person name="Hogues H."/>
            <person name="Cuomo C."/>
            <person name="Berriman M."/>
            <person name="Scherer S."/>
            <person name="Magee B.B."/>
            <person name="Whiteway M."/>
            <person name="Chibana H."/>
            <person name="Nantel A."/>
            <person name="Magee P.T."/>
        </authorList>
    </citation>
    <scope>GENOME REANNOTATION</scope>
    <source>
        <strain>SC5314 / ATCC MYA-2876</strain>
    </source>
</reference>
<reference key="3">
    <citation type="journal article" date="2013" name="Genome Biol.">
        <title>Assembly of a phased diploid Candida albicans genome facilitates allele-specific measurements and provides a simple model for repeat and indel structure.</title>
        <authorList>
            <person name="Muzzey D."/>
            <person name="Schwartz K."/>
            <person name="Weissman J.S."/>
            <person name="Sherlock G."/>
        </authorList>
    </citation>
    <scope>NUCLEOTIDE SEQUENCE [LARGE SCALE GENOMIC DNA]</scope>
    <scope>GENOME REANNOTATION</scope>
    <source>
        <strain>SC5314 / ATCC MYA-2876</strain>
    </source>
</reference>